<gene>
    <name type="primary">vapB7</name>
    <name type="ordered locus">Rv0662c</name>
</gene>
<evidence type="ECO:0000305" key="1">
    <source>
    </source>
</evidence>
<name>VAPB7_MYCTU</name>
<organism>
    <name type="scientific">Mycobacterium tuberculosis (strain ATCC 25618 / H37Rv)</name>
    <dbReference type="NCBI Taxonomy" id="83332"/>
    <lineage>
        <taxon>Bacteria</taxon>
        <taxon>Bacillati</taxon>
        <taxon>Actinomycetota</taxon>
        <taxon>Actinomycetes</taxon>
        <taxon>Mycobacteriales</taxon>
        <taxon>Mycobacteriaceae</taxon>
        <taxon>Mycobacterium</taxon>
        <taxon>Mycobacterium tuberculosis complex</taxon>
    </lineage>
</organism>
<feature type="chain" id="PRO_0000408055" description="Putative antitoxin VapB7">
    <location>
        <begin position="1"/>
        <end position="84"/>
    </location>
</feature>
<accession>O06777</accession>
<accession>L0T4C9</accession>
<keyword id="KW-1185">Reference proteome</keyword>
<keyword id="KW-1277">Toxin-antitoxin system</keyword>
<protein>
    <recommendedName>
        <fullName>Putative antitoxin VapB7</fullName>
    </recommendedName>
</protein>
<sequence>MSMRLAHRLQILLDDECHRRITAVARERGVPVATVVREAIDRGLVSPAGRRKSAGRRLLDAADMSVPEPRELKQELEALRARRG</sequence>
<proteinExistence type="predicted"/>
<dbReference type="EMBL" id="AL123456">
    <property type="protein sequence ID" value="CCP43405.1"/>
    <property type="molecule type" value="Genomic_DNA"/>
</dbReference>
<dbReference type="PIR" id="A70535">
    <property type="entry name" value="A70535"/>
</dbReference>
<dbReference type="RefSeq" id="NP_215176.2">
    <property type="nucleotide sequence ID" value="NC_000962.3"/>
</dbReference>
<dbReference type="RefSeq" id="WP_003911263.1">
    <property type="nucleotide sequence ID" value="NZ_NVQJ01000007.1"/>
</dbReference>
<dbReference type="SMR" id="O06777"/>
<dbReference type="STRING" id="83332.Rv0662c"/>
<dbReference type="PaxDb" id="83332-Rv0662c"/>
<dbReference type="DNASU" id="888117"/>
<dbReference type="GeneID" id="888117"/>
<dbReference type="KEGG" id="mtu:Rv0662c"/>
<dbReference type="KEGG" id="mtv:RVBD_0662c"/>
<dbReference type="PATRIC" id="fig|83332.111.peg.735"/>
<dbReference type="TubercuList" id="Rv0662c"/>
<dbReference type="eggNOG" id="ENOG5033JAC">
    <property type="taxonomic scope" value="Bacteria"/>
</dbReference>
<dbReference type="InParanoid" id="O06777"/>
<dbReference type="OrthoDB" id="5147985at2"/>
<dbReference type="Proteomes" id="UP000001584">
    <property type="component" value="Chromosome"/>
</dbReference>
<dbReference type="GO" id="GO:0005886">
    <property type="term" value="C:plasma membrane"/>
    <property type="evidence" value="ECO:0007005"/>
    <property type="project" value="MTBBASE"/>
</dbReference>
<reference key="1">
    <citation type="journal article" date="1998" name="Nature">
        <title>Deciphering the biology of Mycobacterium tuberculosis from the complete genome sequence.</title>
        <authorList>
            <person name="Cole S.T."/>
            <person name="Brosch R."/>
            <person name="Parkhill J."/>
            <person name="Garnier T."/>
            <person name="Churcher C.M."/>
            <person name="Harris D.E."/>
            <person name="Gordon S.V."/>
            <person name="Eiglmeier K."/>
            <person name="Gas S."/>
            <person name="Barry C.E. III"/>
            <person name="Tekaia F."/>
            <person name="Badcock K."/>
            <person name="Basham D."/>
            <person name="Brown D."/>
            <person name="Chillingworth T."/>
            <person name="Connor R."/>
            <person name="Davies R.M."/>
            <person name="Devlin K."/>
            <person name="Feltwell T."/>
            <person name="Gentles S."/>
            <person name="Hamlin N."/>
            <person name="Holroyd S."/>
            <person name="Hornsby T."/>
            <person name="Jagels K."/>
            <person name="Krogh A."/>
            <person name="McLean J."/>
            <person name="Moule S."/>
            <person name="Murphy L.D."/>
            <person name="Oliver S."/>
            <person name="Osborne J."/>
            <person name="Quail M.A."/>
            <person name="Rajandream M.A."/>
            <person name="Rogers J."/>
            <person name="Rutter S."/>
            <person name="Seeger K."/>
            <person name="Skelton S."/>
            <person name="Squares S."/>
            <person name="Squares R."/>
            <person name="Sulston J.E."/>
            <person name="Taylor K."/>
            <person name="Whitehead S."/>
            <person name="Barrell B.G."/>
        </authorList>
    </citation>
    <scope>NUCLEOTIDE SEQUENCE [LARGE SCALE GENOMIC DNA]</scope>
    <source>
        <strain>ATCC 25618 / H37Rv</strain>
    </source>
</reference>
<reference key="2">
    <citation type="journal article" date="2005" name="Nucleic Acids Res.">
        <title>Toxin-antitoxin loci are highly abundant in free-living but lost from host-associated prokaryotes.</title>
        <authorList>
            <person name="Pandey D.P."/>
            <person name="Gerdes K."/>
        </authorList>
    </citation>
    <scope>POSSIBLE FUNCTION</scope>
    <source>
        <strain>ATCC 25618 / H37Rv</strain>
    </source>
</reference>
<comment type="function">
    <text evidence="1">Antitoxin component of a possible type II toxin-antitoxin (TA) system. The cognate toxin is VapC7.</text>
</comment>